<sequence>MAFLKKSLFLVLFLGIVSLSICEEEKREGEEEEKQEEENEELSEEELRERRALLDKLKSLGKVVGKVAIGVAQHYLNPQQ</sequence>
<dbReference type="GO" id="GO:0005576">
    <property type="term" value="C:extracellular region"/>
    <property type="evidence" value="ECO:0007669"/>
    <property type="project" value="UniProtKB-SubCell"/>
</dbReference>
<dbReference type="GO" id="GO:0042742">
    <property type="term" value="P:defense response to bacterium"/>
    <property type="evidence" value="ECO:0007669"/>
    <property type="project" value="UniProtKB-KW"/>
</dbReference>
<dbReference type="InterPro" id="IPR004275">
    <property type="entry name" value="Frog_antimicrobial_propeptide"/>
</dbReference>
<dbReference type="InterPro" id="IPR016322">
    <property type="entry name" value="FSAP"/>
</dbReference>
<dbReference type="Pfam" id="PF03032">
    <property type="entry name" value="FSAP_sig_propep"/>
    <property type="match status" value="1"/>
</dbReference>
<dbReference type="PIRSF" id="PIRSF001822">
    <property type="entry name" value="Dermaseptin_precursor"/>
    <property type="match status" value="1"/>
</dbReference>
<name>RNSP8_BOARA</name>
<comment type="function">
    <text evidence="1">Has antibacterial activity.</text>
</comment>
<comment type="subcellular location">
    <subcellularLocation>
        <location evidence="4">Secreted</location>
    </subcellularLocation>
</comment>
<comment type="tissue specificity">
    <text evidence="4">Expressed by the skin glands.</text>
</comment>
<comment type="similarity">
    <text evidence="2">Belongs to the frog skin active peptide (FSAP) family. Dermaseptin subfamily.</text>
</comment>
<reference evidence="6" key="1">
    <citation type="journal article" date="2008" name="Biochem. Biophys. Res. Commun.">
        <title>Post-secretory events alter the peptide content of the skin secretion of Hypsiboas raniceps.</title>
        <authorList>
            <person name="Magalhaes B.S."/>
            <person name="Melo J.A.T."/>
            <person name="Leite J.R.S.A."/>
            <person name="Silva L.P."/>
            <person name="Prates M.V."/>
            <person name="Vinecky F."/>
            <person name="Barbosa E.A."/>
            <person name="Verly R.M."/>
            <person name="Mehta A."/>
            <person name="Nicoli J.R."/>
            <person name="Bemquerer M.P."/>
            <person name="Andrade A.C."/>
            <person name="Bloch C. Jr."/>
        </authorList>
    </citation>
    <scope>NUCLEOTIDE SEQUENCE [MRNA]</scope>
    <scope>SUBCELLULAR LOCATION</scope>
    <scope>TISSUE SPECIFICITY</scope>
    <source>
        <tissue evidence="4">Skin</tissue>
    </source>
</reference>
<keyword id="KW-0878">Amphibian defense peptide</keyword>
<keyword id="KW-0044">Antibiotic</keyword>
<keyword id="KW-0929">Antimicrobial</keyword>
<keyword id="KW-0165">Cleavage on pair of basic residues</keyword>
<keyword id="KW-0964">Secreted</keyword>
<keyword id="KW-0732">Signal</keyword>
<proteinExistence type="evidence at transcript level"/>
<accession>P86188</accession>
<feature type="signal peptide" evidence="2">
    <location>
        <begin position="1"/>
        <end position="22"/>
    </location>
</feature>
<feature type="propeptide" id="PRO_0000371451" evidence="1">
    <location>
        <begin position="23"/>
        <end position="49"/>
    </location>
</feature>
<feature type="peptide" id="PRO_0000371452" description="Raniseptin-8" evidence="1">
    <location>
        <begin position="52"/>
        <end position="80"/>
    </location>
</feature>
<feature type="region of interest" description="Disordered" evidence="3">
    <location>
        <begin position="27"/>
        <end position="46"/>
    </location>
</feature>
<feature type="compositionally biased region" description="Acidic residues" evidence="3">
    <location>
        <begin position="30"/>
        <end position="44"/>
    </location>
</feature>
<organism>
    <name type="scientific">Boana raniceps</name>
    <name type="common">Chaco tree frog</name>
    <name type="synonym">Hyla roeschmanni</name>
    <dbReference type="NCBI Taxonomy" id="192750"/>
    <lineage>
        <taxon>Eukaryota</taxon>
        <taxon>Metazoa</taxon>
        <taxon>Chordata</taxon>
        <taxon>Craniata</taxon>
        <taxon>Vertebrata</taxon>
        <taxon>Euteleostomi</taxon>
        <taxon>Amphibia</taxon>
        <taxon>Batrachia</taxon>
        <taxon>Anura</taxon>
        <taxon>Neobatrachia</taxon>
        <taxon>Hyloidea</taxon>
        <taxon>Hylidae</taxon>
        <taxon>Hylinae</taxon>
        <taxon>Cophomantini</taxon>
        <taxon>Boana</taxon>
    </lineage>
</organism>
<protein>
    <recommendedName>
        <fullName evidence="5">Raniseptin-8</fullName>
        <shortName evidence="5">Rsp-8</shortName>
    </recommendedName>
</protein>
<evidence type="ECO:0000250" key="1">
    <source>
        <dbReference type="UniProtKB" id="P86037"/>
    </source>
</evidence>
<evidence type="ECO:0000255" key="2"/>
<evidence type="ECO:0000256" key="3">
    <source>
        <dbReference type="SAM" id="MobiDB-lite"/>
    </source>
</evidence>
<evidence type="ECO:0000269" key="4">
    <source>
    </source>
</evidence>
<evidence type="ECO:0000303" key="5">
    <source>
    </source>
</evidence>
<evidence type="ECO:0000305" key="6"/>